<protein>
    <recommendedName>
        <fullName>Gag polyprotein</fullName>
    </recommendedName>
    <alternativeName>
        <fullName>Pr55Gag</fullName>
    </alternativeName>
    <component>
        <recommendedName>
            <fullName>Matrix protein p17</fullName>
            <shortName>MA</shortName>
        </recommendedName>
    </component>
    <component>
        <recommendedName>
            <fullName>Capsid protein p24</fullName>
            <shortName>CA</shortName>
        </recommendedName>
    </component>
    <component>
        <recommendedName>
            <fullName evidence="6">Spacer peptide 1</fullName>
            <shortName>SP1</shortName>
        </recommendedName>
        <alternativeName>
            <fullName>p2</fullName>
        </alternativeName>
    </component>
    <component>
        <recommendedName>
            <fullName>Nucleocapsid protein p7</fullName>
            <shortName>NC</shortName>
        </recommendedName>
    </component>
    <component>
        <recommendedName>
            <fullName evidence="6">Spacer peptide 2</fullName>
            <shortName>SP2</shortName>
        </recommendedName>
        <alternativeName>
            <fullName>p1</fullName>
        </alternativeName>
    </component>
    <component>
        <recommendedName>
            <fullName>p6-gag</fullName>
        </recommendedName>
    </component>
</protein>
<gene>
    <name type="primary">gag</name>
</gene>
<evidence type="ECO:0000250" key="1"/>
<evidence type="ECO:0000250" key="2">
    <source>
        <dbReference type="UniProtKB" id="P03347"/>
    </source>
</evidence>
<evidence type="ECO:0000250" key="3">
    <source>
        <dbReference type="UniProtKB" id="P03348"/>
    </source>
</evidence>
<evidence type="ECO:0000250" key="4">
    <source>
        <dbReference type="UniProtKB" id="P03349"/>
    </source>
</evidence>
<evidence type="ECO:0000250" key="5">
    <source>
        <dbReference type="UniProtKB" id="P04591"/>
    </source>
</evidence>
<evidence type="ECO:0000250" key="6">
    <source>
        <dbReference type="UniProtKB" id="P12493"/>
    </source>
</evidence>
<evidence type="ECO:0000250" key="7">
    <source>
        <dbReference type="UniProtKB" id="P12497"/>
    </source>
</evidence>
<evidence type="ECO:0000250" key="8">
    <source>
        <dbReference type="UniProtKB" id="P18095"/>
    </source>
</evidence>
<evidence type="ECO:0000255" key="9">
    <source>
        <dbReference type="PROSITE-ProRule" id="PRU00047"/>
    </source>
</evidence>
<evidence type="ECO:0000256" key="10">
    <source>
        <dbReference type="SAM" id="MobiDB-lite"/>
    </source>
</evidence>
<evidence type="ECO:0000305" key="11"/>
<name>GAG_HV2D2</name>
<feature type="initiator methionine" description="Removed; by host" evidence="1">
    <location>
        <position position="1"/>
    </location>
</feature>
<feature type="chain" id="PRO_0000261243" description="Gag polyprotein">
    <location>
        <begin position="2"/>
        <end position="521"/>
    </location>
</feature>
<feature type="chain" id="PRO_0000038605" description="Matrix protein p17" evidence="1">
    <location>
        <begin position="2"/>
        <end position="130"/>
    </location>
</feature>
<feature type="chain" id="PRO_0000038606" description="Capsid protein p24" evidence="1">
    <location>
        <begin position="131"/>
        <end position="360"/>
    </location>
</feature>
<feature type="peptide" id="PRO_0000042071" description="Spacer peptide 1" evidence="1">
    <location>
        <begin position="361"/>
        <end position="377"/>
    </location>
</feature>
<feature type="chain" id="PRO_0000042072" description="Nucleocapsid protein p7" evidence="1">
    <location>
        <begin position="378"/>
        <end position="430"/>
    </location>
</feature>
<feature type="peptide" id="PRO_0000042073" description="Spacer peptide 2" evidence="1">
    <location>
        <begin position="431"/>
        <end position="444"/>
    </location>
</feature>
<feature type="chain" id="PRO_0000042074" description="p6-gag" evidence="1">
    <location>
        <begin position="445"/>
        <end position="521"/>
    </location>
</feature>
<feature type="zinc finger region" description="CCHC-type 1" evidence="9">
    <location>
        <begin position="388"/>
        <end position="405"/>
    </location>
</feature>
<feature type="zinc finger region" description="CCHC-type 2" evidence="9">
    <location>
        <begin position="409"/>
        <end position="426"/>
    </location>
</feature>
<feature type="region of interest" description="Interaction with Gp41" evidence="6">
    <location>
        <begin position="7"/>
        <end position="31"/>
    </location>
</feature>
<feature type="region of interest" description="Interaction with host CALM1" evidence="5">
    <location>
        <begin position="8"/>
        <end position="43"/>
    </location>
</feature>
<feature type="region of interest" description="Interaction with host AP3D1" evidence="7">
    <location>
        <begin position="12"/>
        <end position="19"/>
    </location>
</feature>
<feature type="region of interest" description="Interaction with membrane phosphatidylinositol 4,5-bisphosphate and RNA" evidence="6">
    <location>
        <begin position="14"/>
        <end position="33"/>
    </location>
</feature>
<feature type="region of interest" description="Interaction with membrane phosphatidylinositol 4,5-bisphosphate" evidence="6">
    <location>
        <begin position="73"/>
        <end position="77"/>
    </location>
</feature>
<feature type="region of interest" description="Disordered" evidence="10">
    <location>
        <begin position="105"/>
        <end position="129"/>
    </location>
</feature>
<feature type="region of interest" description="Interaction with host PPIA/CYPA and NUP153" evidence="6">
    <location>
        <begin position="186"/>
        <end position="223"/>
    </location>
</feature>
<feature type="region of interest" description="PPIA/CYPA-binding loop" evidence="5">
    <location>
        <begin position="214"/>
        <end position="221"/>
    </location>
</feature>
<feature type="region of interest" description="Dimerization/Multimerization of capsid protein p24" evidence="5">
    <location>
        <begin position="274"/>
        <end position="360"/>
    </location>
</feature>
<feature type="region of interest" description="Disordered" evidence="10">
    <location>
        <begin position="448"/>
        <end position="484"/>
    </location>
</feature>
<feature type="short sequence motif" description="Nuclear export signal" evidence="1">
    <location>
        <begin position="16"/>
        <end position="22"/>
    </location>
</feature>
<feature type="short sequence motif" description="Nuclear localization signal" evidence="1">
    <location>
        <begin position="26"/>
        <end position="32"/>
    </location>
</feature>
<feature type="short sequence motif" description="PTAP/PSAP motif">
    <location>
        <begin position="455"/>
        <end position="458"/>
    </location>
</feature>
<feature type="compositionally biased region" description="Basic and acidic residues" evidence="10">
    <location>
        <begin position="105"/>
        <end position="114"/>
    </location>
</feature>
<feature type="site" description="Cleavage; by viral protease" evidence="1">
    <location>
        <begin position="130"/>
        <end position="131"/>
    </location>
</feature>
<feature type="site" description="Cleavage; by viral protease" evidence="1">
    <location>
        <begin position="360"/>
        <end position="361"/>
    </location>
</feature>
<feature type="site" description="Cleavage; by viral protease" evidence="1">
    <location>
        <begin position="377"/>
        <end position="378"/>
    </location>
</feature>
<feature type="site" description="Cleavage; by viral protease" evidence="1">
    <location>
        <begin position="430"/>
        <end position="431"/>
    </location>
</feature>
<feature type="site" description="Cleavage; by viral protease" evidence="1">
    <location>
        <begin position="444"/>
        <end position="445"/>
    </location>
</feature>
<feature type="modified residue" description="Phosphoserine; by host MAPK1" evidence="6">
    <location>
        <position position="145"/>
    </location>
</feature>
<feature type="lipid moiety-binding region" description="N-myristoyl glycine; by host" evidence="1">
    <location>
        <position position="2"/>
    </location>
</feature>
<organismHost>
    <name type="scientific">Homo sapiens</name>
    <name type="common">Human</name>
    <dbReference type="NCBI Taxonomy" id="9606"/>
</organismHost>
<reference key="1">
    <citation type="journal article" date="1989" name="Nature">
        <title>A highly divergent HIV-2-related isolate.</title>
        <authorList>
            <person name="Dietrich U."/>
            <person name="Adamski M."/>
            <person name="Kreutz R."/>
            <person name="Seipp A."/>
            <person name="Kuehnel H."/>
            <person name="Ruebsamen-Waigmann H."/>
        </authorList>
    </citation>
    <scope>NUCLEOTIDE SEQUENCE [GENOMIC DNA]</scope>
</reference>
<organism>
    <name type="scientific">Human immunodeficiency virus type 2 subtype B (isolate D205)</name>
    <name type="common">HIV-2</name>
    <dbReference type="NCBI Taxonomy" id="11716"/>
    <lineage>
        <taxon>Viruses</taxon>
        <taxon>Riboviria</taxon>
        <taxon>Pararnavirae</taxon>
        <taxon>Artverviricota</taxon>
        <taxon>Revtraviricetes</taxon>
        <taxon>Ortervirales</taxon>
        <taxon>Retroviridae</taxon>
        <taxon>Orthoretrovirinae</taxon>
        <taxon>Lentivirus</taxon>
        <taxon>Human immunodeficiency virus 2</taxon>
    </lineage>
</organism>
<sequence length="521" mass="57647">MGARGSVLSGKKTDELEKVRLRPGGKKKYMLKHVVWAVNELDRFGLAESLLESKEGCQKILKVLAPLVPTGSENLKSLFNIVCVIFCLHAEEKVKDTEEAKKIAQRHLAADTEKMPATNKPTAPPSGGNYPVQQLAGNYVHLPLSPRTLNAWVKLVEEKKFGAEVVPGFQALSEGCTPYDINQMLNCVGEHQAAMQIIREIINEEAADWDQQHPSPGPMPAGQLRDPRGSDIAGTTSTVEEQIQWMYRAQNPVPVGNIYRRWIQLGLQKCVRMYNPTNILDIKQGPKEPFQSYVDRFYKSLRAEQTDPAVKNWMTQTLLIQNANPDCKLVLKGLGMNPTLEEMLTACQGIGGPGQKARLMAEALKEALTPAPIPFAAVQQKAGKRGTVTCWNCGKQGHTARQCRAPRRQGCWKCGKTGHIMSKCPERQAGFLGLGPWGKKPRNFPMTQVPQGVTPSAPPMNPAEGMTPRGATPSAPPADPAVEMLKSYMQMGRQQRESRERPYKEVTEDLLHLNSLFGEDQ</sequence>
<keyword id="KW-0014">AIDS</keyword>
<keyword id="KW-0167">Capsid protein</keyword>
<keyword id="KW-1032">Host cell membrane</keyword>
<keyword id="KW-1035">Host cytoplasm</keyword>
<keyword id="KW-1039">Host endosome</keyword>
<keyword id="KW-1043">Host membrane</keyword>
<keyword id="KW-1048">Host nucleus</keyword>
<keyword id="KW-0945">Host-virus interaction</keyword>
<keyword id="KW-0449">Lipoprotein</keyword>
<keyword id="KW-0472">Membrane</keyword>
<keyword id="KW-0479">Metal-binding</keyword>
<keyword id="KW-0519">Myristate</keyword>
<keyword id="KW-0597">Phosphoprotein</keyword>
<keyword id="KW-0677">Repeat</keyword>
<keyword id="KW-0688">Ribosomal frameshifting</keyword>
<keyword id="KW-0694">RNA-binding</keyword>
<keyword id="KW-1198">Viral budding</keyword>
<keyword id="KW-1187">Viral budding via the host ESCRT complexes</keyword>
<keyword id="KW-0543">Viral nucleoprotein</keyword>
<keyword id="KW-1188">Viral release from host cell</keyword>
<keyword id="KW-0946">Virion</keyword>
<keyword id="KW-0862">Zinc</keyword>
<keyword id="KW-0863">Zinc-finger</keyword>
<accession>P15832</accession>
<comment type="function">
    <molecule>Gag polyprotein</molecule>
    <text evidence="5">Mediates, with Gag-Pol polyprotein, the essential events in virion assembly, including binding the plasma membrane, making the protein-protein interactions necessary to create spherical particles, recruiting the viral Env proteins, and packaging the genomic RNA via direct interactions with the RNA packaging sequence (Psi).</text>
</comment>
<comment type="function">
    <molecule>Matrix protein p17</molecule>
    <text evidence="1 6">Targets the polyprotein to the plasma membrane via a multipartite membrane-binding signal, that includes its myristoylated N-terminus (By similarity). Matrix protein is part of the pre-integration complex. Implicated in the release from host cell mediated by Vpu. Binds to RNA (By similarity).</text>
</comment>
<comment type="function">
    <molecule>Capsid protein p24</molecule>
    <text evidence="5 6 8">Forms the conical core that encapsulates the genomic RNA-nucleocapsid complex in the virion (By similarity). Most core are conical, with only 7% tubular (By similarity). The core is constituted by capsid protein hexamer subunits (By similarity). The core is disassembled soon after virion entry (By similarity). Host restriction factors such as TRIM5-alpha or TRIMCyp bind retroviral capsids and cause premature capsid disassembly, leading to blocks in reverse transcription (By similarity). Capsid restriction by TRIM5 is one of the factors which restricts HIV-1 to the human species (By similarity). Host PIN1 apparently facilitates the virion uncoating (By similarity). On the other hand, interactions with PDZD8 or CYPA stabilize the capsid (By similarity). The capsid interacts with high affinity with human NONO, promoting detection of viral DNA by CGAS, leading to CGAS-mediated inmmune activation (By similarity).</text>
</comment>
<comment type="function">
    <molecule>Nucleocapsid protein p7</molecule>
    <text evidence="5">Encapsulates and protects viral dimeric unspliced genomic RNA (gRNA). Binds these RNAs through its zinc fingers. Acts as a nucleic acid chaperone which is involved in rearangement of nucleic acid secondary structure during gRNA retrotranscription. Also facilitates template switch leading to recombination. As part of the polyprotein, participates in gRNA dimerization, packaging, tRNA incorporation and virion assembly.</text>
</comment>
<comment type="function">
    <molecule>p6-gag</molecule>
    <text evidence="6">Plays a role in budding of the assembled particle by interacting with the host class E VPS proteins TSG101 and PDCD6IP/AIP1.</text>
</comment>
<comment type="subunit">
    <molecule>Gag polyprotein</molecule>
    <text evidence="4 5">Homotrimer; further assembles as hexamers of trimers. Oligomerization possibly creates a central hole into which the cytoplasmic tail of the gp41 envelope protein may be inserted. Interacts with host TRIM22; this interaction seems to disrupt proper trafficking of Gag polyprotein and may interfere with budding. Interacts with host PDZD8. When ubiquitinated, interacts (via p6-gag domain) with host PACSIN2; this interaction allows PACSIN2 recruitment to viral assembly sites and its subsequent incorporation into virions (By similarity).</text>
</comment>
<comment type="subunit">
    <molecule>Matrix protein p17</molecule>
    <text evidence="5 6">Homotrimer; further assembles as hexamers of trimers. Interacts with gp41 (via C-terminus). Interacts with host CALM1; this interaction induces a conformational change in the Matrix protein, triggering exposure of the myristate group. Interacts with host AP3D1; this interaction allows the polyprotein trafficking to multivesicular bodies during virus assembly. Part of the pre-integration complex (PIC) which is composed of viral genome, matrix protein, Vpr and integrase.</text>
</comment>
<comment type="subunit">
    <molecule>Capsid protein p24</molecule>
    <text evidence="5 6 8">Homodimer; the homodimer further multimerizes as homohexamers or homopentamers (By similarity). Interacts with host NUP98 (By similarity). Interacts with host PPIA/CYPA; this interaction stabilizes the capsid (By similarity). Interacts with host NUP153 (By similarity). Interacts with host PDZD8; this interaction stabilizes the capsid. Interacts with host TRIM5; this interaction destabilizes the capsid (By similarity). Interacts with host CPSF6 (By similarity). Interacts with host NONO; the interaction is the interaction is strong and promotes CGAS-mediated immunity (By similarity).</text>
</comment>
<comment type="subunit">
    <molecule>Nucleocapsid protein p7</molecule>
    <text evidence="6">Interacts with host NUP98.</text>
</comment>
<comment type="subunit">
    <molecule>p6-gag</molecule>
    <text evidence="3 6">Interacts with Vpr; this interaction allows Vpr incorporation into the virion. Interacts with host TSG101. p6-gag interacts with host PDCD6IP/AIP1.</text>
</comment>
<comment type="subcellular location">
    <molecule>Gag polyprotein</molecule>
    <subcellularLocation>
        <location evidence="6">Host cell membrane</location>
        <topology evidence="6">Lipid-anchor</topology>
    </subcellularLocation>
    <subcellularLocation>
        <location evidence="6">Host endosome</location>
        <location evidence="6">Host multivesicular body</location>
    </subcellularLocation>
    <text evidence="6">These locations are probably linked to virus assembly sites. The main location is the cell membrane, but under some circumstances, late endosomal compartments can serve as productive sites for virion assembly.</text>
</comment>
<comment type="subcellular location">
    <molecule>Matrix protein p17</molecule>
    <subcellularLocation>
        <location evidence="6">Virion membrane</location>
        <topology evidence="6">Lipid-anchor</topology>
    </subcellularLocation>
    <subcellularLocation>
        <location evidence="1">Host nucleus</location>
    </subcellularLocation>
    <subcellularLocation>
        <location evidence="1">Host cytoplasm</location>
    </subcellularLocation>
</comment>
<comment type="subcellular location">
    <molecule>Capsid protein p24</molecule>
    <subcellularLocation>
        <location evidence="6">Virion</location>
    </subcellularLocation>
</comment>
<comment type="subcellular location">
    <molecule>Nucleocapsid protein p7</molecule>
    <subcellularLocation>
        <location evidence="6">Virion</location>
    </subcellularLocation>
</comment>
<comment type="alternative products">
    <event type="ribosomal frameshifting"/>
    <isoform>
        <id>P15832-1</id>
        <name>Gag polyprotein</name>
        <sequence type="displayed"/>
    </isoform>
    <isoform>
        <id>P15833-1</id>
        <name>Gag-Pol polyprotein</name>
        <sequence type="external"/>
    </isoform>
    <text>Translation results in the formation of the Gag polyprotein most of the time. Ribosomal frameshifting at the gag-pol genes boundary occurs at low frequency and produces the Gag-Pol polyprotein. This strategy of translation probably allows the virus to modulate the quantity of each viral protein. Maintenance of a correct Gag to Gag-Pol ratio is essential for RNA dimerization and viral infectivity.</text>
</comment>
<comment type="domain">
    <text evidence="1">Late-budding domains (L domains) are short sequence motifs essential for viral particle budding. They recruit proteins of the host ESCRT machinery (Endosomal Sorting Complex Required for Transport) or ESCRT-associated proteins. p6-gag contains one L domains: a PTAP/PSAP motif, which interacts with the UEV domain of TSG101 (By similarity).</text>
</comment>
<comment type="PTM">
    <text evidence="6">Gag-Pol polyprotein: Specific enzymatic cleavages by the viral protease yield mature proteins.</text>
</comment>
<comment type="PTM">
    <molecule>Matrix protein p17</molecule>
    <text evidence="5">Tyrosine phosphorylated presumably in the virion by a host kinase. Phosphorylation is apparently not a major regulator of membrane association.</text>
</comment>
<comment type="PTM">
    <text evidence="6">Capsid protein p24 is phosphorylated possibly by host MAPK1; this phosphorylation is necessary for Pin1-mediated virion uncoating.</text>
</comment>
<comment type="PTM">
    <text evidence="2">Nucleocapsid protein p7 is methylated by host PRMT6, impairing its function by reducing RNA annealing and the initiation of reverse transcription.</text>
</comment>
<comment type="miscellaneous">
    <molecule>Isoform Gag polyprotein</molecule>
    <text>Produced by conventional translation.</text>
</comment>
<comment type="similarity">
    <text evidence="11">Belongs to the primate lentivirus group gag polyprotein family.</text>
</comment>
<dbReference type="EMBL" id="X61240">
    <property type="status" value="NOT_ANNOTATED_CDS"/>
    <property type="molecule type" value="Genomic_DNA"/>
</dbReference>
<dbReference type="PIR" id="S08435">
    <property type="entry name" value="S08435"/>
</dbReference>
<dbReference type="SMR" id="P15832"/>
<dbReference type="PRO" id="PR:P15832"/>
<dbReference type="Proteomes" id="UP000247120">
    <property type="component" value="Segment"/>
</dbReference>
<dbReference type="GO" id="GO:0042025">
    <property type="term" value="C:host cell nucleus"/>
    <property type="evidence" value="ECO:0007669"/>
    <property type="project" value="UniProtKB-SubCell"/>
</dbReference>
<dbReference type="GO" id="GO:0020002">
    <property type="term" value="C:host cell plasma membrane"/>
    <property type="evidence" value="ECO:0007669"/>
    <property type="project" value="UniProtKB-SubCell"/>
</dbReference>
<dbReference type="GO" id="GO:0072494">
    <property type="term" value="C:host multivesicular body"/>
    <property type="evidence" value="ECO:0007669"/>
    <property type="project" value="UniProtKB-SubCell"/>
</dbReference>
<dbReference type="GO" id="GO:0016020">
    <property type="term" value="C:membrane"/>
    <property type="evidence" value="ECO:0007669"/>
    <property type="project" value="UniProtKB-KW"/>
</dbReference>
<dbReference type="GO" id="GO:0019013">
    <property type="term" value="C:viral nucleocapsid"/>
    <property type="evidence" value="ECO:0007669"/>
    <property type="project" value="UniProtKB-KW"/>
</dbReference>
<dbReference type="GO" id="GO:0055036">
    <property type="term" value="C:virion membrane"/>
    <property type="evidence" value="ECO:0007669"/>
    <property type="project" value="UniProtKB-SubCell"/>
</dbReference>
<dbReference type="GO" id="GO:0003723">
    <property type="term" value="F:RNA binding"/>
    <property type="evidence" value="ECO:0007669"/>
    <property type="project" value="UniProtKB-KW"/>
</dbReference>
<dbReference type="GO" id="GO:0005198">
    <property type="term" value="F:structural molecule activity"/>
    <property type="evidence" value="ECO:0007669"/>
    <property type="project" value="InterPro"/>
</dbReference>
<dbReference type="GO" id="GO:0008270">
    <property type="term" value="F:zinc ion binding"/>
    <property type="evidence" value="ECO:0007669"/>
    <property type="project" value="UniProtKB-KW"/>
</dbReference>
<dbReference type="GO" id="GO:0039702">
    <property type="term" value="P:viral budding via host ESCRT complex"/>
    <property type="evidence" value="ECO:0007669"/>
    <property type="project" value="UniProtKB-KW"/>
</dbReference>
<dbReference type="GO" id="GO:0075523">
    <property type="term" value="P:viral translational frameshifting"/>
    <property type="evidence" value="ECO:0007669"/>
    <property type="project" value="UniProtKB-KW"/>
</dbReference>
<dbReference type="Gene3D" id="1.10.1200.30">
    <property type="match status" value="1"/>
</dbReference>
<dbReference type="Gene3D" id="1.10.375.10">
    <property type="entry name" value="Human Immunodeficiency Virus Type 1 Capsid Protein"/>
    <property type="match status" value="1"/>
</dbReference>
<dbReference type="Gene3D" id="1.10.150.90">
    <property type="entry name" value="Immunodeficiency lentiviruses, gag gene matrix protein p17"/>
    <property type="match status" value="1"/>
</dbReference>
<dbReference type="Gene3D" id="1.20.5.760">
    <property type="entry name" value="Single helix bin"/>
    <property type="match status" value="1"/>
</dbReference>
<dbReference type="Gene3D" id="4.10.60.10">
    <property type="entry name" value="Zinc finger, CCHC-type"/>
    <property type="match status" value="1"/>
</dbReference>
<dbReference type="InterPro" id="IPR045345">
    <property type="entry name" value="Gag_p24_C"/>
</dbReference>
<dbReference type="InterPro" id="IPR000071">
    <property type="entry name" value="Lentvrl_matrix_N"/>
</dbReference>
<dbReference type="InterPro" id="IPR012344">
    <property type="entry name" value="Matrix_HIV/RSV_N"/>
</dbReference>
<dbReference type="InterPro" id="IPR050195">
    <property type="entry name" value="Primate_lentivir_Gag_pol-like"/>
</dbReference>
<dbReference type="InterPro" id="IPR008916">
    <property type="entry name" value="Retrov_capsid_C"/>
</dbReference>
<dbReference type="InterPro" id="IPR008919">
    <property type="entry name" value="Retrov_capsid_N"/>
</dbReference>
<dbReference type="InterPro" id="IPR010999">
    <property type="entry name" value="Retrovr_matrix"/>
</dbReference>
<dbReference type="InterPro" id="IPR001878">
    <property type="entry name" value="Znf_CCHC"/>
</dbReference>
<dbReference type="InterPro" id="IPR036875">
    <property type="entry name" value="Znf_CCHC_sf"/>
</dbReference>
<dbReference type="PANTHER" id="PTHR40389:SF4">
    <property type="match status" value="1"/>
</dbReference>
<dbReference type="PANTHER" id="PTHR40389">
    <property type="entry name" value="ENDOGENOUS RETROVIRUS GROUP K MEMBER 24 GAG POLYPROTEIN-RELATED"/>
    <property type="match status" value="1"/>
</dbReference>
<dbReference type="Pfam" id="PF00540">
    <property type="entry name" value="Gag_p17"/>
    <property type="match status" value="1"/>
</dbReference>
<dbReference type="Pfam" id="PF00607">
    <property type="entry name" value="Gag_p24"/>
    <property type="match status" value="1"/>
</dbReference>
<dbReference type="Pfam" id="PF19317">
    <property type="entry name" value="Gag_p24_C"/>
    <property type="match status" value="1"/>
</dbReference>
<dbReference type="Pfam" id="PF00098">
    <property type="entry name" value="zf-CCHC"/>
    <property type="match status" value="2"/>
</dbReference>
<dbReference type="PRINTS" id="PR00234">
    <property type="entry name" value="HIV1MATRIX"/>
</dbReference>
<dbReference type="SMART" id="SM00343">
    <property type="entry name" value="ZnF_C2HC"/>
    <property type="match status" value="2"/>
</dbReference>
<dbReference type="SUPFAM" id="SSF47836">
    <property type="entry name" value="Retroviral matrix proteins"/>
    <property type="match status" value="1"/>
</dbReference>
<dbReference type="SUPFAM" id="SSF47353">
    <property type="entry name" value="Retrovirus capsid dimerization domain-like"/>
    <property type="match status" value="1"/>
</dbReference>
<dbReference type="SUPFAM" id="SSF47943">
    <property type="entry name" value="Retrovirus capsid protein, N-terminal core domain"/>
    <property type="match status" value="1"/>
</dbReference>
<dbReference type="SUPFAM" id="SSF57756">
    <property type="entry name" value="Retrovirus zinc finger-like domains"/>
    <property type="match status" value="1"/>
</dbReference>
<dbReference type="PROSITE" id="PS50158">
    <property type="entry name" value="ZF_CCHC"/>
    <property type="match status" value="2"/>
</dbReference>
<proteinExistence type="inferred from homology"/>